<gene>
    <name evidence="1" type="primary">accA</name>
    <name type="ordered locus">c0223</name>
</gene>
<keyword id="KW-0067">ATP-binding</keyword>
<keyword id="KW-0963">Cytoplasm</keyword>
<keyword id="KW-0275">Fatty acid biosynthesis</keyword>
<keyword id="KW-0276">Fatty acid metabolism</keyword>
<keyword id="KW-0444">Lipid biosynthesis</keyword>
<keyword id="KW-0443">Lipid metabolism</keyword>
<keyword id="KW-0547">Nucleotide-binding</keyword>
<keyword id="KW-1185">Reference proteome</keyword>
<keyword id="KW-0808">Transferase</keyword>
<proteinExistence type="inferred from homology"/>
<dbReference type="EC" id="2.1.3.15" evidence="1"/>
<dbReference type="EMBL" id="AE014075">
    <property type="protein sequence ID" value="AAN78715.1"/>
    <property type="molecule type" value="Genomic_DNA"/>
</dbReference>
<dbReference type="RefSeq" id="WP_000055746.1">
    <property type="nucleotide sequence ID" value="NZ_CP051263.1"/>
</dbReference>
<dbReference type="SMR" id="Q8FL03"/>
<dbReference type="STRING" id="199310.c0223"/>
<dbReference type="GeneID" id="86862695"/>
<dbReference type="KEGG" id="ecc:c0223"/>
<dbReference type="eggNOG" id="COG0825">
    <property type="taxonomic scope" value="Bacteria"/>
</dbReference>
<dbReference type="HOGENOM" id="CLU_015486_0_2_6"/>
<dbReference type="BioCyc" id="ECOL199310:C0223-MONOMER"/>
<dbReference type="UniPathway" id="UPA00655">
    <property type="reaction ID" value="UER00711"/>
</dbReference>
<dbReference type="Proteomes" id="UP000001410">
    <property type="component" value="Chromosome"/>
</dbReference>
<dbReference type="GO" id="GO:0009317">
    <property type="term" value="C:acetyl-CoA carboxylase complex"/>
    <property type="evidence" value="ECO:0007669"/>
    <property type="project" value="InterPro"/>
</dbReference>
<dbReference type="GO" id="GO:0003989">
    <property type="term" value="F:acetyl-CoA carboxylase activity"/>
    <property type="evidence" value="ECO:0007669"/>
    <property type="project" value="InterPro"/>
</dbReference>
<dbReference type="GO" id="GO:0005524">
    <property type="term" value="F:ATP binding"/>
    <property type="evidence" value="ECO:0007669"/>
    <property type="project" value="UniProtKB-KW"/>
</dbReference>
<dbReference type="GO" id="GO:0016743">
    <property type="term" value="F:carboxyl- or carbamoyltransferase activity"/>
    <property type="evidence" value="ECO:0007669"/>
    <property type="project" value="UniProtKB-UniRule"/>
</dbReference>
<dbReference type="GO" id="GO:0006633">
    <property type="term" value="P:fatty acid biosynthetic process"/>
    <property type="evidence" value="ECO:0007669"/>
    <property type="project" value="UniProtKB-KW"/>
</dbReference>
<dbReference type="GO" id="GO:2001295">
    <property type="term" value="P:malonyl-CoA biosynthetic process"/>
    <property type="evidence" value="ECO:0007669"/>
    <property type="project" value="UniProtKB-UniRule"/>
</dbReference>
<dbReference type="FunFam" id="3.90.226.10:FF:000008">
    <property type="entry name" value="Acetyl-coenzyme A carboxylase carboxyl transferase subunit alpha"/>
    <property type="match status" value="1"/>
</dbReference>
<dbReference type="Gene3D" id="3.90.226.10">
    <property type="entry name" value="2-enoyl-CoA Hydratase, Chain A, domain 1"/>
    <property type="match status" value="1"/>
</dbReference>
<dbReference type="HAMAP" id="MF_00823">
    <property type="entry name" value="AcetylCoA_CT_alpha"/>
    <property type="match status" value="1"/>
</dbReference>
<dbReference type="InterPro" id="IPR001095">
    <property type="entry name" value="Acetyl_CoA_COase_a_su"/>
</dbReference>
<dbReference type="InterPro" id="IPR029045">
    <property type="entry name" value="ClpP/crotonase-like_dom_sf"/>
</dbReference>
<dbReference type="InterPro" id="IPR011763">
    <property type="entry name" value="COA_CT_C"/>
</dbReference>
<dbReference type="NCBIfam" id="TIGR00513">
    <property type="entry name" value="accA"/>
    <property type="match status" value="1"/>
</dbReference>
<dbReference type="NCBIfam" id="NF041504">
    <property type="entry name" value="AccA_sub"/>
    <property type="match status" value="1"/>
</dbReference>
<dbReference type="NCBIfam" id="NF004344">
    <property type="entry name" value="PRK05724.1"/>
    <property type="match status" value="1"/>
</dbReference>
<dbReference type="PANTHER" id="PTHR42853">
    <property type="entry name" value="ACETYL-COENZYME A CARBOXYLASE CARBOXYL TRANSFERASE SUBUNIT ALPHA"/>
    <property type="match status" value="1"/>
</dbReference>
<dbReference type="PANTHER" id="PTHR42853:SF3">
    <property type="entry name" value="ACETYL-COENZYME A CARBOXYLASE CARBOXYL TRANSFERASE SUBUNIT ALPHA, CHLOROPLASTIC"/>
    <property type="match status" value="1"/>
</dbReference>
<dbReference type="Pfam" id="PF03255">
    <property type="entry name" value="ACCA"/>
    <property type="match status" value="1"/>
</dbReference>
<dbReference type="PRINTS" id="PR01069">
    <property type="entry name" value="ACCCTRFRASEA"/>
</dbReference>
<dbReference type="SUPFAM" id="SSF52096">
    <property type="entry name" value="ClpP/crotonase"/>
    <property type="match status" value="1"/>
</dbReference>
<dbReference type="PROSITE" id="PS50989">
    <property type="entry name" value="COA_CT_CTER"/>
    <property type="match status" value="1"/>
</dbReference>
<protein>
    <recommendedName>
        <fullName evidence="1">Acetyl-coenzyme A carboxylase carboxyl transferase subunit alpha</fullName>
        <shortName evidence="1">ACCase subunit alpha</shortName>
        <shortName evidence="1">Acetyl-CoA carboxylase carboxyltransferase subunit alpha</shortName>
        <ecNumber evidence="1">2.1.3.15</ecNumber>
    </recommendedName>
</protein>
<comment type="function">
    <text evidence="1">Component of the acetyl coenzyme A carboxylase (ACC) complex. First, biotin carboxylase catalyzes the carboxylation of biotin on its carrier protein (BCCP) and then the CO(2) group is transferred by the carboxyltransferase to acetyl-CoA to form malonyl-CoA.</text>
</comment>
<comment type="catalytic activity">
    <reaction evidence="1">
        <text>N(6)-carboxybiotinyl-L-lysyl-[protein] + acetyl-CoA = N(6)-biotinyl-L-lysyl-[protein] + malonyl-CoA</text>
        <dbReference type="Rhea" id="RHEA:54728"/>
        <dbReference type="Rhea" id="RHEA-COMP:10505"/>
        <dbReference type="Rhea" id="RHEA-COMP:10506"/>
        <dbReference type="ChEBI" id="CHEBI:57288"/>
        <dbReference type="ChEBI" id="CHEBI:57384"/>
        <dbReference type="ChEBI" id="CHEBI:83144"/>
        <dbReference type="ChEBI" id="CHEBI:83145"/>
        <dbReference type="EC" id="2.1.3.15"/>
    </reaction>
</comment>
<comment type="pathway">
    <text evidence="1">Lipid metabolism; malonyl-CoA biosynthesis; malonyl-CoA from acetyl-CoA: step 1/1.</text>
</comment>
<comment type="subunit">
    <text evidence="1">Acetyl-CoA carboxylase is a heterohexamer composed of biotin carboxyl carrier protein (AccB), biotin carboxylase (AccC) and two subunits each of ACCase subunit alpha (AccA) and ACCase subunit beta (AccD).</text>
</comment>
<comment type="subcellular location">
    <subcellularLocation>
        <location evidence="1">Cytoplasm</location>
    </subcellularLocation>
</comment>
<comment type="similarity">
    <text evidence="1">Belongs to the AccA family.</text>
</comment>
<accession>Q8FL03</accession>
<feature type="chain" id="PRO_0000223768" description="Acetyl-coenzyme A carboxylase carboxyl transferase subunit alpha">
    <location>
        <begin position="1"/>
        <end position="319"/>
    </location>
</feature>
<feature type="domain" description="CoA carboxyltransferase C-terminal" evidence="2">
    <location>
        <begin position="35"/>
        <end position="296"/>
    </location>
</feature>
<organism>
    <name type="scientific">Escherichia coli O6:H1 (strain CFT073 / ATCC 700928 / UPEC)</name>
    <dbReference type="NCBI Taxonomy" id="199310"/>
    <lineage>
        <taxon>Bacteria</taxon>
        <taxon>Pseudomonadati</taxon>
        <taxon>Pseudomonadota</taxon>
        <taxon>Gammaproteobacteria</taxon>
        <taxon>Enterobacterales</taxon>
        <taxon>Enterobacteriaceae</taxon>
        <taxon>Escherichia</taxon>
    </lineage>
</organism>
<reference key="1">
    <citation type="journal article" date="2002" name="Proc. Natl. Acad. Sci. U.S.A.">
        <title>Extensive mosaic structure revealed by the complete genome sequence of uropathogenic Escherichia coli.</title>
        <authorList>
            <person name="Welch R.A."/>
            <person name="Burland V."/>
            <person name="Plunkett G. III"/>
            <person name="Redford P."/>
            <person name="Roesch P."/>
            <person name="Rasko D."/>
            <person name="Buckles E.L."/>
            <person name="Liou S.-R."/>
            <person name="Boutin A."/>
            <person name="Hackett J."/>
            <person name="Stroud D."/>
            <person name="Mayhew G.F."/>
            <person name="Rose D.J."/>
            <person name="Zhou S."/>
            <person name="Schwartz D.C."/>
            <person name="Perna N.T."/>
            <person name="Mobley H.L.T."/>
            <person name="Donnenberg M.S."/>
            <person name="Blattner F.R."/>
        </authorList>
    </citation>
    <scope>NUCLEOTIDE SEQUENCE [LARGE SCALE GENOMIC DNA]</scope>
    <source>
        <strain>CFT073 / ATCC 700928 / UPEC</strain>
    </source>
</reference>
<evidence type="ECO:0000255" key="1">
    <source>
        <dbReference type="HAMAP-Rule" id="MF_00823"/>
    </source>
</evidence>
<evidence type="ECO:0000255" key="2">
    <source>
        <dbReference type="PROSITE-ProRule" id="PRU01137"/>
    </source>
</evidence>
<sequence>MSLNFLDFEQPIAELEAKIDSLTAVSRQDEKLDINIDEEVHRLREKSVELTRKIFADLGAWQIAQLARHPQRPYTLDYVRLAFDEFDELAGDRAYADDKAIVGGIARLDGRPVMIIGHQKGRETKEKIRRNFGMPAPEGYRKALRLMQMAERFKMPIITFIDTPGAYPGVGAEERGQSEAIARNLREMSRLSVPTICTVIGEGGSGGALAIGVGDKVNMLQYSTYSVISPEGCASILWKSADKAPLAAEAMGIIAPRLKELKLIDSIIPEPLGGAHRNPEAMAASLKAQLLADLADLDVLSTEDLKNRRYQRLMSYGYA</sequence>
<name>ACCA_ECOL6</name>